<gene>
    <name evidence="1" type="primary">lipB</name>
    <name type="ordered locus">PputGB1_4854</name>
</gene>
<comment type="function">
    <text evidence="1">Catalyzes the transfer of endogenously produced octanoic acid from octanoyl-acyl-carrier-protein onto the lipoyl domains of lipoate-dependent enzymes. Lipoyl-ACP can also act as a substrate although octanoyl-ACP is likely to be the physiological substrate.</text>
</comment>
<comment type="catalytic activity">
    <reaction evidence="1">
        <text>octanoyl-[ACP] + L-lysyl-[protein] = N(6)-octanoyl-L-lysyl-[protein] + holo-[ACP] + H(+)</text>
        <dbReference type="Rhea" id="RHEA:17665"/>
        <dbReference type="Rhea" id="RHEA-COMP:9636"/>
        <dbReference type="Rhea" id="RHEA-COMP:9685"/>
        <dbReference type="Rhea" id="RHEA-COMP:9752"/>
        <dbReference type="Rhea" id="RHEA-COMP:9928"/>
        <dbReference type="ChEBI" id="CHEBI:15378"/>
        <dbReference type="ChEBI" id="CHEBI:29969"/>
        <dbReference type="ChEBI" id="CHEBI:64479"/>
        <dbReference type="ChEBI" id="CHEBI:78463"/>
        <dbReference type="ChEBI" id="CHEBI:78809"/>
        <dbReference type="EC" id="2.3.1.181"/>
    </reaction>
</comment>
<comment type="pathway">
    <text evidence="1">Protein modification; protein lipoylation via endogenous pathway; protein N(6)-(lipoyl)lysine from octanoyl-[acyl-carrier-protein]: step 1/2.</text>
</comment>
<comment type="subcellular location">
    <subcellularLocation>
        <location evidence="1">Cytoplasm</location>
    </subcellularLocation>
</comment>
<comment type="miscellaneous">
    <text evidence="1">In the reaction, the free carboxyl group of octanoic acid is attached via an amide linkage to the epsilon-amino group of a specific lysine residue of lipoyl domains of lipoate-dependent enzymes.</text>
</comment>
<comment type="similarity">
    <text evidence="1">Belongs to the LipB family.</text>
</comment>
<proteinExistence type="inferred from homology"/>
<protein>
    <recommendedName>
        <fullName evidence="1">Octanoyltransferase</fullName>
        <ecNumber evidence="1">2.3.1.181</ecNumber>
    </recommendedName>
    <alternativeName>
        <fullName evidence="1">Lipoate-protein ligase B</fullName>
    </alternativeName>
    <alternativeName>
        <fullName evidence="1">Lipoyl/octanoyl transferase</fullName>
    </alternativeName>
    <alternativeName>
        <fullName evidence="1">Octanoyl-[acyl-carrier-protein]-protein N-octanoyltransferase</fullName>
    </alternativeName>
</protein>
<evidence type="ECO:0000255" key="1">
    <source>
        <dbReference type="HAMAP-Rule" id="MF_00013"/>
    </source>
</evidence>
<evidence type="ECO:0000255" key="2">
    <source>
        <dbReference type="PROSITE-ProRule" id="PRU01067"/>
    </source>
</evidence>
<organism>
    <name type="scientific">Pseudomonas putida (strain GB-1)</name>
    <dbReference type="NCBI Taxonomy" id="76869"/>
    <lineage>
        <taxon>Bacteria</taxon>
        <taxon>Pseudomonadati</taxon>
        <taxon>Pseudomonadota</taxon>
        <taxon>Gammaproteobacteria</taxon>
        <taxon>Pseudomonadales</taxon>
        <taxon>Pseudomonadaceae</taxon>
        <taxon>Pseudomonas</taxon>
    </lineage>
</organism>
<sequence length="215" mass="23574">MSACLGFRELGLQPYEPVLEAMRRFTEQRSPDSQDEIWLVEHPAVFTQGQAGKAEHLLVPGDIPVVQTDRGGQVTYHGPGQQVAYLLLDVRRLGFGVRELVSRIEQALIGLLASYDVQASAKPDAPGVYVDGAKIASLGLRIRNGRSFHGLALNVDMDLAPFRRINPCGYAGLAMTQLRDLAGPIELDEVRTRLRGQLVKHLDYAEQTTLTGGID</sequence>
<accession>B0KJX5</accession>
<name>LIPB_PSEPG</name>
<reference key="1">
    <citation type="submission" date="2008-01" db="EMBL/GenBank/DDBJ databases">
        <title>Complete sequence of Pseudomonas putida GB-1.</title>
        <authorList>
            <consortium name="US DOE Joint Genome Institute"/>
            <person name="Copeland A."/>
            <person name="Lucas S."/>
            <person name="Lapidus A."/>
            <person name="Barry K."/>
            <person name="Glavina del Rio T."/>
            <person name="Dalin E."/>
            <person name="Tice H."/>
            <person name="Pitluck S."/>
            <person name="Bruce D."/>
            <person name="Goodwin L."/>
            <person name="Chertkov O."/>
            <person name="Brettin T."/>
            <person name="Detter J.C."/>
            <person name="Han C."/>
            <person name="Kuske C.R."/>
            <person name="Schmutz J."/>
            <person name="Larimer F."/>
            <person name="Land M."/>
            <person name="Hauser L."/>
            <person name="Kyrpides N."/>
            <person name="Kim E."/>
            <person name="McCarthy J.K."/>
            <person name="Richardson P."/>
        </authorList>
    </citation>
    <scope>NUCLEOTIDE SEQUENCE [LARGE SCALE GENOMIC DNA]</scope>
    <source>
        <strain>GB-1</strain>
    </source>
</reference>
<keyword id="KW-0012">Acyltransferase</keyword>
<keyword id="KW-0963">Cytoplasm</keyword>
<keyword id="KW-0808">Transferase</keyword>
<dbReference type="EC" id="2.3.1.181" evidence="1"/>
<dbReference type="EMBL" id="CP000926">
    <property type="protein sequence ID" value="ABZ00739.1"/>
    <property type="molecule type" value="Genomic_DNA"/>
</dbReference>
<dbReference type="RefSeq" id="WP_012274372.1">
    <property type="nucleotide sequence ID" value="NC_010322.1"/>
</dbReference>
<dbReference type="SMR" id="B0KJX5"/>
<dbReference type="GeneID" id="45526346"/>
<dbReference type="KEGG" id="ppg:PputGB1_4854"/>
<dbReference type="eggNOG" id="COG0321">
    <property type="taxonomic scope" value="Bacteria"/>
</dbReference>
<dbReference type="HOGENOM" id="CLU_035168_3_1_6"/>
<dbReference type="UniPathway" id="UPA00538">
    <property type="reaction ID" value="UER00592"/>
</dbReference>
<dbReference type="Proteomes" id="UP000002157">
    <property type="component" value="Chromosome"/>
</dbReference>
<dbReference type="GO" id="GO:0005737">
    <property type="term" value="C:cytoplasm"/>
    <property type="evidence" value="ECO:0007669"/>
    <property type="project" value="UniProtKB-SubCell"/>
</dbReference>
<dbReference type="GO" id="GO:0033819">
    <property type="term" value="F:lipoyl(octanoyl) transferase activity"/>
    <property type="evidence" value="ECO:0007669"/>
    <property type="project" value="UniProtKB-EC"/>
</dbReference>
<dbReference type="GO" id="GO:0036211">
    <property type="term" value="P:protein modification process"/>
    <property type="evidence" value="ECO:0007669"/>
    <property type="project" value="InterPro"/>
</dbReference>
<dbReference type="CDD" id="cd16444">
    <property type="entry name" value="LipB"/>
    <property type="match status" value="1"/>
</dbReference>
<dbReference type="FunFam" id="3.30.930.10:FF:000020">
    <property type="entry name" value="Octanoyltransferase"/>
    <property type="match status" value="1"/>
</dbReference>
<dbReference type="Gene3D" id="3.30.930.10">
    <property type="entry name" value="Bira Bifunctional Protein, Domain 2"/>
    <property type="match status" value="1"/>
</dbReference>
<dbReference type="HAMAP" id="MF_00013">
    <property type="entry name" value="LipB"/>
    <property type="match status" value="1"/>
</dbReference>
<dbReference type="InterPro" id="IPR045864">
    <property type="entry name" value="aa-tRNA-synth_II/BPL/LPL"/>
</dbReference>
<dbReference type="InterPro" id="IPR004143">
    <property type="entry name" value="BPL_LPL_catalytic"/>
</dbReference>
<dbReference type="InterPro" id="IPR000544">
    <property type="entry name" value="Octanoyltransferase"/>
</dbReference>
<dbReference type="InterPro" id="IPR020605">
    <property type="entry name" value="Octanoyltransferase_CS"/>
</dbReference>
<dbReference type="NCBIfam" id="TIGR00214">
    <property type="entry name" value="lipB"/>
    <property type="match status" value="1"/>
</dbReference>
<dbReference type="NCBIfam" id="NF010922">
    <property type="entry name" value="PRK14342.1"/>
    <property type="match status" value="1"/>
</dbReference>
<dbReference type="PANTHER" id="PTHR10993:SF7">
    <property type="entry name" value="LIPOYLTRANSFERASE 2, MITOCHONDRIAL-RELATED"/>
    <property type="match status" value="1"/>
</dbReference>
<dbReference type="PANTHER" id="PTHR10993">
    <property type="entry name" value="OCTANOYLTRANSFERASE"/>
    <property type="match status" value="1"/>
</dbReference>
<dbReference type="Pfam" id="PF21948">
    <property type="entry name" value="LplA-B_cat"/>
    <property type="match status" value="1"/>
</dbReference>
<dbReference type="PIRSF" id="PIRSF016262">
    <property type="entry name" value="LPLase"/>
    <property type="match status" value="1"/>
</dbReference>
<dbReference type="SUPFAM" id="SSF55681">
    <property type="entry name" value="Class II aaRS and biotin synthetases"/>
    <property type="match status" value="1"/>
</dbReference>
<dbReference type="PROSITE" id="PS51733">
    <property type="entry name" value="BPL_LPL_CATALYTIC"/>
    <property type="match status" value="1"/>
</dbReference>
<dbReference type="PROSITE" id="PS01313">
    <property type="entry name" value="LIPB"/>
    <property type="match status" value="1"/>
</dbReference>
<feature type="chain" id="PRO_1000074009" description="Octanoyltransferase">
    <location>
        <begin position="1"/>
        <end position="215"/>
    </location>
</feature>
<feature type="domain" description="BPL/LPL catalytic" evidence="2">
    <location>
        <begin position="31"/>
        <end position="206"/>
    </location>
</feature>
<feature type="active site" description="Acyl-thioester intermediate" evidence="1">
    <location>
        <position position="168"/>
    </location>
</feature>
<feature type="binding site" evidence="1">
    <location>
        <begin position="70"/>
        <end position="77"/>
    </location>
    <ligand>
        <name>substrate</name>
    </ligand>
</feature>
<feature type="binding site" evidence="1">
    <location>
        <begin position="137"/>
        <end position="139"/>
    </location>
    <ligand>
        <name>substrate</name>
    </ligand>
</feature>
<feature type="binding site" evidence="1">
    <location>
        <begin position="150"/>
        <end position="152"/>
    </location>
    <ligand>
        <name>substrate</name>
    </ligand>
</feature>
<feature type="site" description="Lowers pKa of active site Cys" evidence="1">
    <location>
        <position position="134"/>
    </location>
</feature>